<sequence>MQSFLPFSRPAIGSEEINAVANVLGSGWITTGPQNHQLETDFCQIFGCKHAIAVCSATAGMHITLLALGIGPGDEVITPSQTWVSTINMIVLLGAEPVMVDVDRDTLMVNAAAIEAAITPNTKAIIPVHYAGAPCDLDALRQISQRHGIPLIEDAAHAVGTRYRDQWIGEQGTAIFSFHAIKNITCAEGGLVATDDDELAARVRRLKFHGLGVDAFDRQIQGRSPQAEVVEPGYKYNLSDIHAAIAVVQLRRLPEINARRQALVASYHKALAHLPLQPLALPHYSHQHAWHLFMVRVDEERCGISRDQLMACLKDMGIGSGLHFRAVHSQKYYRERYPHLCLPNTEWNSARLCTLPLFPDMLDSDIERVANALTTIIGSHRVTK</sequence>
<protein>
    <recommendedName>
        <fullName evidence="1">UDP-4-amino-4-deoxy-L-arabinose--oxoglutarate aminotransferase</fullName>
        <ecNumber evidence="1">2.6.1.87</ecNumber>
    </recommendedName>
    <alternativeName>
        <fullName evidence="1">UDP-(beta-L-threo-pentapyranosyl-4''-ulose diphosphate) aminotransferase</fullName>
        <shortName evidence="1">UDP-Ara4O aminotransferase</shortName>
    </alternativeName>
    <alternativeName>
        <fullName evidence="1">UDP-4-amino-4-deoxy-L-arabinose aminotransferase</fullName>
    </alternativeName>
</protein>
<accession>B2K5L5</accession>
<reference key="1">
    <citation type="submission" date="2008-04" db="EMBL/GenBank/DDBJ databases">
        <title>Complete sequence of Yersinia pseudotuberculosis PB1/+.</title>
        <authorList>
            <person name="Copeland A."/>
            <person name="Lucas S."/>
            <person name="Lapidus A."/>
            <person name="Glavina del Rio T."/>
            <person name="Dalin E."/>
            <person name="Tice H."/>
            <person name="Bruce D."/>
            <person name="Goodwin L."/>
            <person name="Pitluck S."/>
            <person name="Munk A.C."/>
            <person name="Brettin T."/>
            <person name="Detter J.C."/>
            <person name="Han C."/>
            <person name="Tapia R."/>
            <person name="Schmutz J."/>
            <person name="Larimer F."/>
            <person name="Land M."/>
            <person name="Hauser L."/>
            <person name="Challacombe J.F."/>
            <person name="Green L."/>
            <person name="Lindler L.E."/>
            <person name="Nikolich M.P."/>
            <person name="Richardson P."/>
        </authorList>
    </citation>
    <scope>NUCLEOTIDE SEQUENCE [LARGE SCALE GENOMIC DNA]</scope>
    <source>
        <strain>PB1/+</strain>
    </source>
</reference>
<organism>
    <name type="scientific">Yersinia pseudotuberculosis serotype IB (strain PB1/+)</name>
    <dbReference type="NCBI Taxonomy" id="502801"/>
    <lineage>
        <taxon>Bacteria</taxon>
        <taxon>Pseudomonadati</taxon>
        <taxon>Pseudomonadota</taxon>
        <taxon>Gammaproteobacteria</taxon>
        <taxon>Enterobacterales</taxon>
        <taxon>Yersiniaceae</taxon>
        <taxon>Yersinia</taxon>
    </lineage>
</organism>
<name>ARNB_YERPB</name>
<comment type="function">
    <text evidence="1">Catalyzes the conversion of UDP-4-keto-arabinose (UDP-Ara4O) to UDP-4-amino-4-deoxy-L-arabinose (UDP-L-Ara4N). The modified arabinose is attached to lipid A and is required for resistance to polymyxin and cationic antimicrobial peptides.</text>
</comment>
<comment type="catalytic activity">
    <reaction evidence="1">
        <text>UDP-4-amino-4-deoxy-beta-L-arabinose + 2-oxoglutarate = UDP-beta-L-threo-pentopyranos-4-ulose + L-glutamate</text>
        <dbReference type="Rhea" id="RHEA:24710"/>
        <dbReference type="ChEBI" id="CHEBI:16810"/>
        <dbReference type="ChEBI" id="CHEBI:29985"/>
        <dbReference type="ChEBI" id="CHEBI:58708"/>
        <dbReference type="ChEBI" id="CHEBI:58710"/>
        <dbReference type="EC" id="2.6.1.87"/>
    </reaction>
</comment>
<comment type="cofactor">
    <cofactor evidence="1">
        <name>pyridoxal 5'-phosphate</name>
        <dbReference type="ChEBI" id="CHEBI:597326"/>
    </cofactor>
</comment>
<comment type="pathway">
    <text evidence="1">Nucleotide-sugar biosynthesis; UDP-4-deoxy-4-formamido-beta-L-arabinose biosynthesis; UDP-4-deoxy-4-formamido-beta-L-arabinose from UDP-alpha-D-glucuronate: step 2/3.</text>
</comment>
<comment type="pathway">
    <text evidence="1">Bacterial outer membrane biogenesis; lipopolysaccharide biosynthesis.</text>
</comment>
<comment type="subunit">
    <text evidence="1">Homodimer.</text>
</comment>
<comment type="similarity">
    <text evidence="1">Belongs to the DegT/DnrJ/EryC1 family. ArnB subfamily.</text>
</comment>
<feature type="chain" id="PRO_1000137963" description="UDP-4-amino-4-deoxy-L-arabinose--oxoglutarate aminotransferase">
    <location>
        <begin position="1"/>
        <end position="384"/>
    </location>
</feature>
<feature type="modified residue" description="N6-(pyridoxal phosphate)lysine" evidence="1">
    <location>
        <position position="182"/>
    </location>
</feature>
<dbReference type="EC" id="2.6.1.87" evidence="1"/>
<dbReference type="EMBL" id="CP001048">
    <property type="protein sequence ID" value="ACC89366.1"/>
    <property type="molecule type" value="Genomic_DNA"/>
</dbReference>
<dbReference type="RefSeq" id="WP_002211825.1">
    <property type="nucleotide sequence ID" value="NZ_CP009780.1"/>
</dbReference>
<dbReference type="SMR" id="B2K5L5"/>
<dbReference type="GeneID" id="57976255"/>
<dbReference type="KEGG" id="ypb:YPTS_2405"/>
<dbReference type="PATRIC" id="fig|502801.10.peg.1811"/>
<dbReference type="UniPathway" id="UPA00030"/>
<dbReference type="UniPathway" id="UPA00032">
    <property type="reaction ID" value="UER00493"/>
</dbReference>
<dbReference type="GO" id="GO:0016020">
    <property type="term" value="C:membrane"/>
    <property type="evidence" value="ECO:0007669"/>
    <property type="project" value="GOC"/>
</dbReference>
<dbReference type="GO" id="GO:0030170">
    <property type="term" value="F:pyridoxal phosphate binding"/>
    <property type="evidence" value="ECO:0007669"/>
    <property type="project" value="TreeGrafter"/>
</dbReference>
<dbReference type="GO" id="GO:0099620">
    <property type="term" value="F:UDP-4-amino-4-deoxy-L-arabinose aminotransferase"/>
    <property type="evidence" value="ECO:0007669"/>
    <property type="project" value="UniProtKB-EC"/>
</dbReference>
<dbReference type="GO" id="GO:0009245">
    <property type="term" value="P:lipid A biosynthetic process"/>
    <property type="evidence" value="ECO:0007669"/>
    <property type="project" value="UniProtKB-KW"/>
</dbReference>
<dbReference type="GO" id="GO:0009103">
    <property type="term" value="P:lipopolysaccharide biosynthetic process"/>
    <property type="evidence" value="ECO:0007669"/>
    <property type="project" value="UniProtKB-UniRule"/>
</dbReference>
<dbReference type="GO" id="GO:0046677">
    <property type="term" value="P:response to antibiotic"/>
    <property type="evidence" value="ECO:0007669"/>
    <property type="project" value="UniProtKB-KW"/>
</dbReference>
<dbReference type="CDD" id="cd00616">
    <property type="entry name" value="AHBA_syn"/>
    <property type="match status" value="1"/>
</dbReference>
<dbReference type="FunFam" id="3.40.640.10:FF:000040">
    <property type="entry name" value="UDP-4-amino-4-deoxy-L-arabinose--oxoglutarate aminotransferase"/>
    <property type="match status" value="1"/>
</dbReference>
<dbReference type="FunFam" id="3.90.1150.10:FF:000030">
    <property type="entry name" value="UDP-4-amino-4-deoxy-L-arabinose--oxoglutarate aminotransferase"/>
    <property type="match status" value="1"/>
</dbReference>
<dbReference type="Gene3D" id="3.90.1150.10">
    <property type="entry name" value="Aspartate Aminotransferase, domain 1"/>
    <property type="match status" value="1"/>
</dbReference>
<dbReference type="Gene3D" id="3.40.640.10">
    <property type="entry name" value="Type I PLP-dependent aspartate aminotransferase-like (Major domain)"/>
    <property type="match status" value="1"/>
</dbReference>
<dbReference type="HAMAP" id="MF_01167">
    <property type="entry name" value="ArnB_transfer"/>
    <property type="match status" value="1"/>
</dbReference>
<dbReference type="InterPro" id="IPR022850">
    <property type="entry name" value="ArnB_NH2Trfase"/>
</dbReference>
<dbReference type="InterPro" id="IPR000653">
    <property type="entry name" value="DegT/StrS_aminotransferase"/>
</dbReference>
<dbReference type="InterPro" id="IPR015424">
    <property type="entry name" value="PyrdxlP-dep_Trfase"/>
</dbReference>
<dbReference type="InterPro" id="IPR015421">
    <property type="entry name" value="PyrdxlP-dep_Trfase_major"/>
</dbReference>
<dbReference type="InterPro" id="IPR015422">
    <property type="entry name" value="PyrdxlP-dep_Trfase_small"/>
</dbReference>
<dbReference type="NCBIfam" id="NF008658">
    <property type="entry name" value="PRK11658.1"/>
    <property type="match status" value="1"/>
</dbReference>
<dbReference type="PANTHER" id="PTHR30244">
    <property type="entry name" value="TRANSAMINASE"/>
    <property type="match status" value="1"/>
</dbReference>
<dbReference type="PANTHER" id="PTHR30244:SF41">
    <property type="entry name" value="UDP-4-AMINO-4-DEOXY-L-ARABINOSE--OXOGLUTARATE AMINOTRANSFERASE"/>
    <property type="match status" value="1"/>
</dbReference>
<dbReference type="Pfam" id="PF01041">
    <property type="entry name" value="DegT_DnrJ_EryC1"/>
    <property type="match status" value="1"/>
</dbReference>
<dbReference type="PIRSF" id="PIRSF000390">
    <property type="entry name" value="PLP_StrS"/>
    <property type="match status" value="1"/>
</dbReference>
<dbReference type="SUPFAM" id="SSF53383">
    <property type="entry name" value="PLP-dependent transferases"/>
    <property type="match status" value="1"/>
</dbReference>
<gene>
    <name evidence="1" type="primary">arnB</name>
    <name type="ordered locus">YPTS_2405</name>
</gene>
<keyword id="KW-0032">Aminotransferase</keyword>
<keyword id="KW-0046">Antibiotic resistance</keyword>
<keyword id="KW-0441">Lipid A biosynthesis</keyword>
<keyword id="KW-0444">Lipid biosynthesis</keyword>
<keyword id="KW-0443">Lipid metabolism</keyword>
<keyword id="KW-0448">Lipopolysaccharide biosynthesis</keyword>
<keyword id="KW-0663">Pyridoxal phosphate</keyword>
<keyword id="KW-0808">Transferase</keyword>
<proteinExistence type="inferred from homology"/>
<evidence type="ECO:0000255" key="1">
    <source>
        <dbReference type="HAMAP-Rule" id="MF_01167"/>
    </source>
</evidence>